<gene>
    <name evidence="1" type="primary">yciB</name>
    <name type="ordered locus">SBO_1811</name>
</gene>
<sequence>MKQFLDFLPLVVFFAFYKIYDIYAATAALIVATAIVLIYSWVRFRKVEKMALITFVLVVVFGGLTLFFHNDEFIKWKVTVIYALFAGALLVSQWVMKKPLIQRMLSKELTLPQPVWSKLNLAWAVFFILCGLANIYIAFWLPQNIWVNFKVFGLTALTLIFTLLSGIYIYRHMPQEDKS</sequence>
<comment type="function">
    <text evidence="1">Plays a role in cell envelope biogenesis, maintenance of cell envelope integrity and membrane homeostasis.</text>
</comment>
<comment type="subcellular location">
    <subcellularLocation>
        <location evidence="1">Cell inner membrane</location>
        <topology evidence="1">Multi-pass membrane protein</topology>
    </subcellularLocation>
</comment>
<comment type="similarity">
    <text evidence="1">Belongs to the YciB family.</text>
</comment>
<feature type="chain" id="PRO_1000021064" description="Inner membrane-spanning protein YciB">
    <location>
        <begin position="1"/>
        <end position="179"/>
    </location>
</feature>
<feature type="transmembrane region" description="Helical" evidence="1">
    <location>
        <begin position="22"/>
        <end position="42"/>
    </location>
</feature>
<feature type="transmembrane region" description="Helical" evidence="1">
    <location>
        <begin position="50"/>
        <end position="70"/>
    </location>
</feature>
<feature type="transmembrane region" description="Helical" evidence="1">
    <location>
        <begin position="76"/>
        <end position="96"/>
    </location>
</feature>
<feature type="transmembrane region" description="Helical" evidence="1">
    <location>
        <begin position="121"/>
        <end position="141"/>
    </location>
</feature>
<feature type="transmembrane region" description="Helical" evidence="1">
    <location>
        <begin position="149"/>
        <end position="169"/>
    </location>
</feature>
<proteinExistence type="inferred from homology"/>
<evidence type="ECO:0000255" key="1">
    <source>
        <dbReference type="HAMAP-Rule" id="MF_00189"/>
    </source>
</evidence>
<protein>
    <recommendedName>
        <fullName evidence="1">Inner membrane-spanning protein YciB</fullName>
    </recommendedName>
</protein>
<keyword id="KW-0997">Cell inner membrane</keyword>
<keyword id="KW-1003">Cell membrane</keyword>
<keyword id="KW-0472">Membrane</keyword>
<keyword id="KW-0812">Transmembrane</keyword>
<keyword id="KW-1133">Transmembrane helix</keyword>
<accession>Q31ZU8</accession>
<organism>
    <name type="scientific">Shigella boydii serotype 4 (strain Sb227)</name>
    <dbReference type="NCBI Taxonomy" id="300268"/>
    <lineage>
        <taxon>Bacteria</taxon>
        <taxon>Pseudomonadati</taxon>
        <taxon>Pseudomonadota</taxon>
        <taxon>Gammaproteobacteria</taxon>
        <taxon>Enterobacterales</taxon>
        <taxon>Enterobacteriaceae</taxon>
        <taxon>Shigella</taxon>
    </lineage>
</organism>
<dbReference type="EMBL" id="CP000036">
    <property type="protein sequence ID" value="ABB66410.1"/>
    <property type="molecule type" value="Genomic_DNA"/>
</dbReference>
<dbReference type="RefSeq" id="WP_000808673.1">
    <property type="nucleotide sequence ID" value="NC_007613.1"/>
</dbReference>
<dbReference type="KEGG" id="sbo:SBO_1811"/>
<dbReference type="HOGENOM" id="CLU_089554_2_0_6"/>
<dbReference type="Proteomes" id="UP000007067">
    <property type="component" value="Chromosome"/>
</dbReference>
<dbReference type="GO" id="GO:0005886">
    <property type="term" value="C:plasma membrane"/>
    <property type="evidence" value="ECO:0007669"/>
    <property type="project" value="UniProtKB-SubCell"/>
</dbReference>
<dbReference type="HAMAP" id="MF_00189">
    <property type="entry name" value="YciB"/>
    <property type="match status" value="1"/>
</dbReference>
<dbReference type="InterPro" id="IPR006008">
    <property type="entry name" value="YciB"/>
</dbReference>
<dbReference type="NCBIfam" id="TIGR00997">
    <property type="entry name" value="ispZ"/>
    <property type="match status" value="1"/>
</dbReference>
<dbReference type="NCBIfam" id="NF001324">
    <property type="entry name" value="PRK00259.1-2"/>
    <property type="match status" value="1"/>
</dbReference>
<dbReference type="NCBIfam" id="NF001325">
    <property type="entry name" value="PRK00259.1-3"/>
    <property type="match status" value="1"/>
</dbReference>
<dbReference type="NCBIfam" id="NF001326">
    <property type="entry name" value="PRK00259.1-4"/>
    <property type="match status" value="1"/>
</dbReference>
<dbReference type="PANTHER" id="PTHR36917:SF1">
    <property type="entry name" value="INNER MEMBRANE-SPANNING PROTEIN YCIB"/>
    <property type="match status" value="1"/>
</dbReference>
<dbReference type="PANTHER" id="PTHR36917">
    <property type="entry name" value="INTRACELLULAR SEPTATION PROTEIN A-RELATED"/>
    <property type="match status" value="1"/>
</dbReference>
<dbReference type="Pfam" id="PF04279">
    <property type="entry name" value="IspA"/>
    <property type="match status" value="1"/>
</dbReference>
<name>YCIB_SHIBS</name>
<reference key="1">
    <citation type="journal article" date="2005" name="Nucleic Acids Res.">
        <title>Genome dynamics and diversity of Shigella species, the etiologic agents of bacillary dysentery.</title>
        <authorList>
            <person name="Yang F."/>
            <person name="Yang J."/>
            <person name="Zhang X."/>
            <person name="Chen L."/>
            <person name="Jiang Y."/>
            <person name="Yan Y."/>
            <person name="Tang X."/>
            <person name="Wang J."/>
            <person name="Xiong Z."/>
            <person name="Dong J."/>
            <person name="Xue Y."/>
            <person name="Zhu Y."/>
            <person name="Xu X."/>
            <person name="Sun L."/>
            <person name="Chen S."/>
            <person name="Nie H."/>
            <person name="Peng J."/>
            <person name="Xu J."/>
            <person name="Wang Y."/>
            <person name="Yuan Z."/>
            <person name="Wen Y."/>
            <person name="Yao Z."/>
            <person name="Shen Y."/>
            <person name="Qiang B."/>
            <person name="Hou Y."/>
            <person name="Yu J."/>
            <person name="Jin Q."/>
        </authorList>
    </citation>
    <scope>NUCLEOTIDE SEQUENCE [LARGE SCALE GENOMIC DNA]</scope>
    <source>
        <strain>Sb227</strain>
    </source>
</reference>